<protein>
    <recommendedName>
        <fullName evidence="1">Proline--tRNA ligase</fullName>
        <ecNumber evidence="1">6.1.1.15</ecNumber>
    </recommendedName>
    <alternativeName>
        <fullName evidence="1">Prolyl-tRNA synthetase</fullName>
        <shortName evidence="1">ProRS</shortName>
    </alternativeName>
</protein>
<sequence length="579" mass="65780">MKTSLLFYRTSKNANKEASVLSYELLEKAGYLFKTSKGIYSYTPLFQRVILKMTEIIREELNAIGGQEVCLPLLQSAELWQKTGRWEAFLSEKLLYVLKDRENKEMCLAPTHEEVVSEFVSQWLTGRKQLPVHLYQIGTKFRDEIRPRFGLMRAKEFLMEDSYTFSDSPEQMEEQYAKLRLAYQRIFDRLNLKYVIVTADGGKIGKGKSEEFHVLCSLGEDTICVSGSYGANIEAAQAIPPSYTYSSELLPMKEVATPNVRTIEDLETFFNTPRQQIIKTLVVKVHKKGSEQFFAICIRGDRQVNLTKVSSFLQADDCELASDEEIIKHLHVEKGFIGPLHCPVPCYADETTRPMTNFICANNQKDIHCRYVNWERDIPLPIFGDFLLAESGDLCPQNNEAPYEIFQGVEVAHIFNLGTRYTECFSVGFQDENGEKQLCWMGTYGIGVGRTLAACIEQLADSKGIVWPLAVAPFSITILYNGGDTEGEAVASQFYQSLNTAGFEPLLDDRNERLGFKLKDSDLLGIPYKLIIGKSFQKTGMLEIESRSGEKYNISPENLLDWCSKNLPCHTRKIPPIRE</sequence>
<gene>
    <name evidence="1" type="primary">proS</name>
    <name type="ordered locus">TC_0672</name>
</gene>
<reference key="1">
    <citation type="journal article" date="2000" name="Nucleic Acids Res.">
        <title>Genome sequences of Chlamydia trachomatis MoPn and Chlamydia pneumoniae AR39.</title>
        <authorList>
            <person name="Read T.D."/>
            <person name="Brunham R.C."/>
            <person name="Shen C."/>
            <person name="Gill S.R."/>
            <person name="Heidelberg J.F."/>
            <person name="White O."/>
            <person name="Hickey E.K."/>
            <person name="Peterson J.D."/>
            <person name="Utterback T.R."/>
            <person name="Berry K.J."/>
            <person name="Bass S."/>
            <person name="Linher K.D."/>
            <person name="Weidman J.F."/>
            <person name="Khouri H.M."/>
            <person name="Craven B."/>
            <person name="Bowman C."/>
            <person name="Dodson R.J."/>
            <person name="Gwinn M.L."/>
            <person name="Nelson W.C."/>
            <person name="DeBoy R.T."/>
            <person name="Kolonay J.F."/>
            <person name="McClarty G."/>
            <person name="Salzberg S.L."/>
            <person name="Eisen J.A."/>
            <person name="Fraser C.M."/>
        </authorList>
    </citation>
    <scope>NUCLEOTIDE SEQUENCE [LARGE SCALE GENOMIC DNA]</scope>
    <source>
        <strain>MoPn / Nigg</strain>
    </source>
</reference>
<comment type="function">
    <text evidence="1">Catalyzes the attachment of proline to tRNA(Pro) in a two-step reaction: proline is first activated by ATP to form Pro-AMP and then transferred to the acceptor end of tRNA(Pro). As ProRS can inadvertently accommodate and process non-cognate amino acids such as alanine and cysteine, to avoid such errors it has two additional distinct editing activities against alanine. One activity is designated as 'pretransfer' editing and involves the tRNA(Pro)-independent hydrolysis of activated Ala-AMP. The other activity is designated 'posttransfer' editing and involves deacylation of mischarged Ala-tRNA(Pro). The misacylated Cys-tRNA(Pro) is not edited by ProRS.</text>
</comment>
<comment type="catalytic activity">
    <reaction evidence="1">
        <text>tRNA(Pro) + L-proline + ATP = L-prolyl-tRNA(Pro) + AMP + diphosphate</text>
        <dbReference type="Rhea" id="RHEA:14305"/>
        <dbReference type="Rhea" id="RHEA-COMP:9700"/>
        <dbReference type="Rhea" id="RHEA-COMP:9702"/>
        <dbReference type="ChEBI" id="CHEBI:30616"/>
        <dbReference type="ChEBI" id="CHEBI:33019"/>
        <dbReference type="ChEBI" id="CHEBI:60039"/>
        <dbReference type="ChEBI" id="CHEBI:78442"/>
        <dbReference type="ChEBI" id="CHEBI:78532"/>
        <dbReference type="ChEBI" id="CHEBI:456215"/>
        <dbReference type="EC" id="6.1.1.15"/>
    </reaction>
</comment>
<comment type="subunit">
    <text evidence="1">Homodimer.</text>
</comment>
<comment type="subcellular location">
    <subcellularLocation>
        <location evidence="1">Cytoplasm</location>
    </subcellularLocation>
</comment>
<comment type="domain">
    <text evidence="1">Consists of three domains: the N-terminal catalytic domain, the editing domain and the C-terminal anticodon-binding domain.</text>
</comment>
<comment type="similarity">
    <text evidence="1">Belongs to the class-II aminoacyl-tRNA synthetase family. ProS type 1 subfamily.</text>
</comment>
<accession>Q9PK01</accession>
<keyword id="KW-0030">Aminoacyl-tRNA synthetase</keyword>
<keyword id="KW-0067">ATP-binding</keyword>
<keyword id="KW-0963">Cytoplasm</keyword>
<keyword id="KW-0436">Ligase</keyword>
<keyword id="KW-0547">Nucleotide-binding</keyword>
<keyword id="KW-0648">Protein biosynthesis</keyword>
<name>SYP_CHLMU</name>
<proteinExistence type="inferred from homology"/>
<organism>
    <name type="scientific">Chlamydia muridarum (strain MoPn / Nigg)</name>
    <dbReference type="NCBI Taxonomy" id="243161"/>
    <lineage>
        <taxon>Bacteria</taxon>
        <taxon>Pseudomonadati</taxon>
        <taxon>Chlamydiota</taxon>
        <taxon>Chlamydiia</taxon>
        <taxon>Chlamydiales</taxon>
        <taxon>Chlamydiaceae</taxon>
        <taxon>Chlamydia/Chlamydophila group</taxon>
        <taxon>Chlamydia</taxon>
    </lineage>
</organism>
<feature type="chain" id="PRO_0000139325" description="Proline--tRNA ligase">
    <location>
        <begin position="1"/>
        <end position="579"/>
    </location>
</feature>
<dbReference type="EC" id="6.1.1.15" evidence="1"/>
<dbReference type="EMBL" id="AE002160">
    <property type="protein sequence ID" value="AAF39493.1"/>
    <property type="molecule type" value="Genomic_DNA"/>
</dbReference>
<dbReference type="PIR" id="B81678">
    <property type="entry name" value="B81678"/>
</dbReference>
<dbReference type="RefSeq" id="WP_010231178.1">
    <property type="nucleotide sequence ID" value="NZ_CP063055.1"/>
</dbReference>
<dbReference type="SMR" id="Q9PK01"/>
<dbReference type="GeneID" id="1246033"/>
<dbReference type="KEGG" id="cmu:TC_0672"/>
<dbReference type="eggNOG" id="COG0442">
    <property type="taxonomic scope" value="Bacteria"/>
</dbReference>
<dbReference type="HOGENOM" id="CLU_016739_0_0_0"/>
<dbReference type="OrthoDB" id="9809052at2"/>
<dbReference type="Proteomes" id="UP000000800">
    <property type="component" value="Chromosome"/>
</dbReference>
<dbReference type="GO" id="GO:0005829">
    <property type="term" value="C:cytosol"/>
    <property type="evidence" value="ECO:0007669"/>
    <property type="project" value="TreeGrafter"/>
</dbReference>
<dbReference type="GO" id="GO:0002161">
    <property type="term" value="F:aminoacyl-tRNA deacylase activity"/>
    <property type="evidence" value="ECO:0007669"/>
    <property type="project" value="InterPro"/>
</dbReference>
<dbReference type="GO" id="GO:0005524">
    <property type="term" value="F:ATP binding"/>
    <property type="evidence" value="ECO:0007669"/>
    <property type="project" value="UniProtKB-UniRule"/>
</dbReference>
<dbReference type="GO" id="GO:0004827">
    <property type="term" value="F:proline-tRNA ligase activity"/>
    <property type="evidence" value="ECO:0007669"/>
    <property type="project" value="UniProtKB-UniRule"/>
</dbReference>
<dbReference type="GO" id="GO:0006433">
    <property type="term" value="P:prolyl-tRNA aminoacylation"/>
    <property type="evidence" value="ECO:0007669"/>
    <property type="project" value="UniProtKB-UniRule"/>
</dbReference>
<dbReference type="CDD" id="cd04334">
    <property type="entry name" value="ProRS-INS"/>
    <property type="match status" value="1"/>
</dbReference>
<dbReference type="CDD" id="cd00861">
    <property type="entry name" value="ProRS_anticodon_short"/>
    <property type="match status" value="1"/>
</dbReference>
<dbReference type="CDD" id="cd00779">
    <property type="entry name" value="ProRS_core_prok"/>
    <property type="match status" value="1"/>
</dbReference>
<dbReference type="FunFam" id="3.30.930.10:FF:000042">
    <property type="entry name" value="probable proline--tRNA ligase, mitochondrial"/>
    <property type="match status" value="1"/>
</dbReference>
<dbReference type="Gene3D" id="3.40.50.800">
    <property type="entry name" value="Anticodon-binding domain"/>
    <property type="match status" value="1"/>
</dbReference>
<dbReference type="Gene3D" id="3.30.930.10">
    <property type="entry name" value="Bira Bifunctional Protein, Domain 2"/>
    <property type="match status" value="1"/>
</dbReference>
<dbReference type="Gene3D" id="3.90.960.10">
    <property type="entry name" value="YbaK/aminoacyl-tRNA synthetase-associated domain"/>
    <property type="match status" value="1"/>
</dbReference>
<dbReference type="HAMAP" id="MF_01569">
    <property type="entry name" value="Pro_tRNA_synth_type1"/>
    <property type="match status" value="1"/>
</dbReference>
<dbReference type="InterPro" id="IPR002314">
    <property type="entry name" value="aa-tRNA-synt_IIb"/>
</dbReference>
<dbReference type="InterPro" id="IPR006195">
    <property type="entry name" value="aa-tRNA-synth_II"/>
</dbReference>
<dbReference type="InterPro" id="IPR045864">
    <property type="entry name" value="aa-tRNA-synth_II/BPL/LPL"/>
</dbReference>
<dbReference type="InterPro" id="IPR004154">
    <property type="entry name" value="Anticodon-bd"/>
</dbReference>
<dbReference type="InterPro" id="IPR036621">
    <property type="entry name" value="Anticodon-bd_dom_sf"/>
</dbReference>
<dbReference type="InterPro" id="IPR002316">
    <property type="entry name" value="Pro-tRNA-ligase_IIa"/>
</dbReference>
<dbReference type="InterPro" id="IPR004500">
    <property type="entry name" value="Pro-tRNA-synth_IIa_bac-type"/>
</dbReference>
<dbReference type="InterPro" id="IPR023717">
    <property type="entry name" value="Pro-tRNA-Synthase_IIa_type1"/>
</dbReference>
<dbReference type="InterPro" id="IPR050062">
    <property type="entry name" value="Pro-tRNA_synthetase"/>
</dbReference>
<dbReference type="InterPro" id="IPR044140">
    <property type="entry name" value="ProRS_anticodon_short"/>
</dbReference>
<dbReference type="InterPro" id="IPR033730">
    <property type="entry name" value="ProRS_core_prok"/>
</dbReference>
<dbReference type="InterPro" id="IPR036754">
    <property type="entry name" value="YbaK/aa-tRNA-synt-asso_dom_sf"/>
</dbReference>
<dbReference type="InterPro" id="IPR007214">
    <property type="entry name" value="YbaK/aa-tRNA-synth-assoc-dom"/>
</dbReference>
<dbReference type="NCBIfam" id="NF006625">
    <property type="entry name" value="PRK09194.1"/>
    <property type="match status" value="1"/>
</dbReference>
<dbReference type="NCBIfam" id="TIGR00409">
    <property type="entry name" value="proS_fam_II"/>
    <property type="match status" value="1"/>
</dbReference>
<dbReference type="PANTHER" id="PTHR42753">
    <property type="entry name" value="MITOCHONDRIAL RIBOSOME PROTEIN L39/PROLYL-TRNA LIGASE FAMILY MEMBER"/>
    <property type="match status" value="1"/>
</dbReference>
<dbReference type="PANTHER" id="PTHR42753:SF2">
    <property type="entry name" value="PROLINE--TRNA LIGASE"/>
    <property type="match status" value="1"/>
</dbReference>
<dbReference type="Pfam" id="PF03129">
    <property type="entry name" value="HGTP_anticodon"/>
    <property type="match status" value="1"/>
</dbReference>
<dbReference type="Pfam" id="PF00587">
    <property type="entry name" value="tRNA-synt_2b"/>
    <property type="match status" value="1"/>
</dbReference>
<dbReference type="Pfam" id="PF04073">
    <property type="entry name" value="tRNA_edit"/>
    <property type="match status" value="1"/>
</dbReference>
<dbReference type="PRINTS" id="PR01046">
    <property type="entry name" value="TRNASYNTHPRO"/>
</dbReference>
<dbReference type="SUPFAM" id="SSF52954">
    <property type="entry name" value="Class II aaRS ABD-related"/>
    <property type="match status" value="1"/>
</dbReference>
<dbReference type="SUPFAM" id="SSF55681">
    <property type="entry name" value="Class II aaRS and biotin synthetases"/>
    <property type="match status" value="1"/>
</dbReference>
<dbReference type="SUPFAM" id="SSF55826">
    <property type="entry name" value="YbaK/ProRS associated domain"/>
    <property type="match status" value="1"/>
</dbReference>
<dbReference type="PROSITE" id="PS50862">
    <property type="entry name" value="AA_TRNA_LIGASE_II"/>
    <property type="match status" value="1"/>
</dbReference>
<evidence type="ECO:0000255" key="1">
    <source>
        <dbReference type="HAMAP-Rule" id="MF_01569"/>
    </source>
</evidence>